<organism>
    <name type="scientific">Brucella melitensis biotype 1 (strain ATCC 23456 / CCUG 17765 / NCTC 10094 / 16M)</name>
    <dbReference type="NCBI Taxonomy" id="224914"/>
    <lineage>
        <taxon>Bacteria</taxon>
        <taxon>Pseudomonadati</taxon>
        <taxon>Pseudomonadota</taxon>
        <taxon>Alphaproteobacteria</taxon>
        <taxon>Hyphomicrobiales</taxon>
        <taxon>Brucellaceae</taxon>
        <taxon>Brucella/Ochrobactrum group</taxon>
        <taxon>Brucella</taxon>
    </lineage>
</organism>
<reference key="1">
    <citation type="journal article" date="2002" name="Proc. Natl. Acad. Sci. U.S.A.">
        <title>The genome sequence of the facultative intracellular pathogen Brucella melitensis.</title>
        <authorList>
            <person name="DelVecchio V.G."/>
            <person name="Kapatral V."/>
            <person name="Redkar R.J."/>
            <person name="Patra G."/>
            <person name="Mujer C."/>
            <person name="Los T."/>
            <person name="Ivanova N."/>
            <person name="Anderson I."/>
            <person name="Bhattacharyya A."/>
            <person name="Lykidis A."/>
            <person name="Reznik G."/>
            <person name="Jablonski L."/>
            <person name="Larsen N."/>
            <person name="D'Souza M."/>
            <person name="Bernal A."/>
            <person name="Mazur M."/>
            <person name="Goltsman E."/>
            <person name="Selkov E."/>
            <person name="Elzer P.H."/>
            <person name="Hagius S."/>
            <person name="O'Callaghan D."/>
            <person name="Letesson J.-J."/>
            <person name="Haselkorn R."/>
            <person name="Kyrpides N.C."/>
            <person name="Overbeek R."/>
        </authorList>
    </citation>
    <scope>NUCLEOTIDE SEQUENCE [LARGE SCALE GENOMIC DNA]</scope>
    <source>
        <strain>ATCC 23456 / CCUG 17765 / NCTC 10094 / 16M</strain>
    </source>
</reference>
<proteinExistence type="inferred from homology"/>
<accession>P67539</accession>
<accession>Q8FYP8</accession>
<accession>Q8YJ53</accession>
<protein>
    <recommendedName>
        <fullName evidence="1">Bifunctional purine biosynthesis protein PurH</fullName>
    </recommendedName>
    <domain>
        <recommendedName>
            <fullName evidence="1">Phosphoribosylaminoimidazolecarboxamide formyltransferase</fullName>
            <ecNumber evidence="1">2.1.2.3</ecNumber>
        </recommendedName>
        <alternativeName>
            <fullName evidence="1">AICAR transformylase</fullName>
        </alternativeName>
    </domain>
    <domain>
        <recommendedName>
            <fullName evidence="1">IMP cyclohydrolase</fullName>
            <ecNumber evidence="1">3.5.4.10</ecNumber>
        </recommendedName>
        <alternativeName>
            <fullName evidence="1">ATIC</fullName>
        </alternativeName>
        <alternativeName>
            <fullName evidence="1">IMP synthase</fullName>
        </alternativeName>
        <alternativeName>
            <fullName evidence="1">Inosinicase</fullName>
        </alternativeName>
    </domain>
</protein>
<comment type="catalytic activity">
    <reaction evidence="1">
        <text>(6R)-10-formyltetrahydrofolate + 5-amino-1-(5-phospho-beta-D-ribosyl)imidazole-4-carboxamide = 5-formamido-1-(5-phospho-D-ribosyl)imidazole-4-carboxamide + (6S)-5,6,7,8-tetrahydrofolate</text>
        <dbReference type="Rhea" id="RHEA:22192"/>
        <dbReference type="ChEBI" id="CHEBI:57453"/>
        <dbReference type="ChEBI" id="CHEBI:58467"/>
        <dbReference type="ChEBI" id="CHEBI:58475"/>
        <dbReference type="ChEBI" id="CHEBI:195366"/>
        <dbReference type="EC" id="2.1.2.3"/>
    </reaction>
</comment>
<comment type="catalytic activity">
    <reaction evidence="1">
        <text>IMP + H2O = 5-formamido-1-(5-phospho-D-ribosyl)imidazole-4-carboxamide</text>
        <dbReference type="Rhea" id="RHEA:18445"/>
        <dbReference type="ChEBI" id="CHEBI:15377"/>
        <dbReference type="ChEBI" id="CHEBI:58053"/>
        <dbReference type="ChEBI" id="CHEBI:58467"/>
        <dbReference type="EC" id="3.5.4.10"/>
    </reaction>
</comment>
<comment type="pathway">
    <text evidence="1">Purine metabolism; IMP biosynthesis via de novo pathway; 5-formamido-1-(5-phospho-D-ribosyl)imidazole-4-carboxamide from 5-amino-1-(5-phospho-D-ribosyl)imidazole-4-carboxamide (10-formyl THF route): step 1/1.</text>
</comment>
<comment type="pathway">
    <text evidence="1">Purine metabolism; IMP biosynthesis via de novo pathway; IMP from 5-formamido-1-(5-phospho-D-ribosyl)imidazole-4-carboxamide: step 1/1.</text>
</comment>
<comment type="domain">
    <text evidence="1">The IMP cyclohydrolase activity resides in the N-terminal region.</text>
</comment>
<comment type="similarity">
    <text evidence="1">Belongs to the PurH family.</text>
</comment>
<feature type="chain" id="PRO_0000192074" description="Bifunctional purine biosynthesis protein PurH">
    <location>
        <begin position="1"/>
        <end position="538"/>
    </location>
</feature>
<feature type="domain" description="MGS-like" evidence="2">
    <location>
        <begin position="6"/>
        <end position="158"/>
    </location>
</feature>
<name>PUR9_BRUME</name>
<gene>
    <name evidence="1" type="primary">purH</name>
    <name type="ordered locus">BMEI0233</name>
</gene>
<evidence type="ECO:0000255" key="1">
    <source>
        <dbReference type="HAMAP-Rule" id="MF_00139"/>
    </source>
</evidence>
<evidence type="ECO:0000255" key="2">
    <source>
        <dbReference type="PROSITE-ProRule" id="PRU01202"/>
    </source>
</evidence>
<keyword id="KW-0378">Hydrolase</keyword>
<keyword id="KW-0511">Multifunctional enzyme</keyword>
<keyword id="KW-0658">Purine biosynthesis</keyword>
<keyword id="KW-0808">Transferase</keyword>
<sequence>MAVSSKHIPAPDLHRVRRALLSVSDKTGLIDFAKALHANGVEILSTGGTAKSIAAAGIPVKDVSEITGFPEIMDGRVKTLHPAVHGGLLAVRNDPEHVAAMEEHGIGGIDLAVINLYPFEEVRFKGGDYDTTVENIDIGGPAMIRASAKNHAYVATVVDPADYADVVAELEKHSGSLPLAFRKKLAAKAFSRTAAYDAAISNWFAEAIDEETPTYRAVAGKLHSVMRYGENPHQTAGFYLTGEKRPGVATATQLQGKQLSYNNINDTDAAFELVAEFDPARTAAVAIIKHANPCGVAEASTIKEAYLKALACDPVSAFGGIVALNRTLDEEAAEEIVKTFTEVIIAPDATEGAQAIVAAKKNLRLLVTGGLPDPRAKGIAAKTVAGGLLVQSRDNGVVDDLDLKVVTKRAPTEAELNDLKFAFRVGKHVKSNAIVYVKDGATVGIGAGQMSRVDSARIAARKAEDAAEAAGLAAPLTKGCVVASDAFFPFADGLLSAVEAGATAVIQPGGSMRDDEVIAAADEHGIAMVMTGMRHFRH</sequence>
<dbReference type="EC" id="2.1.2.3" evidence="1"/>
<dbReference type="EC" id="3.5.4.10" evidence="1"/>
<dbReference type="EMBL" id="AE008917">
    <property type="protein sequence ID" value="AAL51415.1"/>
    <property type="molecule type" value="Genomic_DNA"/>
</dbReference>
<dbReference type="PIR" id="AD3281">
    <property type="entry name" value="AD3281"/>
</dbReference>
<dbReference type="RefSeq" id="WP_004684287.1">
    <property type="nucleotide sequence ID" value="NZ_GG703781.1"/>
</dbReference>
<dbReference type="SMR" id="P67539"/>
<dbReference type="GeneID" id="97533059"/>
<dbReference type="KEGG" id="bme:BMEI0233"/>
<dbReference type="KEGG" id="bmel:DK63_1198"/>
<dbReference type="PATRIC" id="fig|224914.52.peg.1267"/>
<dbReference type="eggNOG" id="COG0138">
    <property type="taxonomic scope" value="Bacteria"/>
</dbReference>
<dbReference type="PhylomeDB" id="P67539"/>
<dbReference type="UniPathway" id="UPA00074">
    <property type="reaction ID" value="UER00133"/>
</dbReference>
<dbReference type="UniPathway" id="UPA00074">
    <property type="reaction ID" value="UER00135"/>
</dbReference>
<dbReference type="Proteomes" id="UP000000419">
    <property type="component" value="Chromosome I"/>
</dbReference>
<dbReference type="GO" id="GO:0005829">
    <property type="term" value="C:cytosol"/>
    <property type="evidence" value="ECO:0007669"/>
    <property type="project" value="TreeGrafter"/>
</dbReference>
<dbReference type="GO" id="GO:0003937">
    <property type="term" value="F:IMP cyclohydrolase activity"/>
    <property type="evidence" value="ECO:0007669"/>
    <property type="project" value="UniProtKB-UniRule"/>
</dbReference>
<dbReference type="GO" id="GO:0004643">
    <property type="term" value="F:phosphoribosylaminoimidazolecarboxamide formyltransferase activity"/>
    <property type="evidence" value="ECO:0007669"/>
    <property type="project" value="UniProtKB-UniRule"/>
</dbReference>
<dbReference type="GO" id="GO:0006189">
    <property type="term" value="P:'de novo' IMP biosynthetic process"/>
    <property type="evidence" value="ECO:0007669"/>
    <property type="project" value="UniProtKB-UniRule"/>
</dbReference>
<dbReference type="CDD" id="cd01421">
    <property type="entry name" value="IMPCH"/>
    <property type="match status" value="1"/>
</dbReference>
<dbReference type="FunFam" id="3.40.140.20:FF:000001">
    <property type="entry name" value="Bifunctional purine biosynthesis protein PurH"/>
    <property type="match status" value="1"/>
</dbReference>
<dbReference type="FunFam" id="3.40.140.20:FF:000002">
    <property type="entry name" value="Bifunctional purine biosynthesis protein PurH"/>
    <property type="match status" value="1"/>
</dbReference>
<dbReference type="FunFam" id="3.40.50.1380:FF:000001">
    <property type="entry name" value="Bifunctional purine biosynthesis protein PurH"/>
    <property type="match status" value="1"/>
</dbReference>
<dbReference type="Gene3D" id="3.40.140.20">
    <property type="match status" value="2"/>
</dbReference>
<dbReference type="Gene3D" id="3.40.50.1380">
    <property type="entry name" value="Methylglyoxal synthase-like domain"/>
    <property type="match status" value="1"/>
</dbReference>
<dbReference type="HAMAP" id="MF_00139">
    <property type="entry name" value="PurH"/>
    <property type="match status" value="1"/>
</dbReference>
<dbReference type="InterPro" id="IPR024051">
    <property type="entry name" value="AICAR_Tfase_dup_dom_sf"/>
</dbReference>
<dbReference type="InterPro" id="IPR016193">
    <property type="entry name" value="Cytidine_deaminase-like"/>
</dbReference>
<dbReference type="InterPro" id="IPR011607">
    <property type="entry name" value="MGS-like_dom"/>
</dbReference>
<dbReference type="InterPro" id="IPR036914">
    <property type="entry name" value="MGS-like_dom_sf"/>
</dbReference>
<dbReference type="InterPro" id="IPR002695">
    <property type="entry name" value="PurH-like"/>
</dbReference>
<dbReference type="NCBIfam" id="NF002049">
    <property type="entry name" value="PRK00881.1"/>
    <property type="match status" value="1"/>
</dbReference>
<dbReference type="NCBIfam" id="TIGR00355">
    <property type="entry name" value="purH"/>
    <property type="match status" value="1"/>
</dbReference>
<dbReference type="PANTHER" id="PTHR11692:SF0">
    <property type="entry name" value="BIFUNCTIONAL PURINE BIOSYNTHESIS PROTEIN ATIC"/>
    <property type="match status" value="1"/>
</dbReference>
<dbReference type="PANTHER" id="PTHR11692">
    <property type="entry name" value="BIFUNCTIONAL PURINE BIOSYNTHESIS PROTEIN PURH"/>
    <property type="match status" value="1"/>
</dbReference>
<dbReference type="Pfam" id="PF01808">
    <property type="entry name" value="AICARFT_IMPCHas"/>
    <property type="match status" value="1"/>
</dbReference>
<dbReference type="Pfam" id="PF02142">
    <property type="entry name" value="MGS"/>
    <property type="match status" value="1"/>
</dbReference>
<dbReference type="PIRSF" id="PIRSF000414">
    <property type="entry name" value="AICARFT_IMPCHas"/>
    <property type="match status" value="1"/>
</dbReference>
<dbReference type="SMART" id="SM00798">
    <property type="entry name" value="AICARFT_IMPCHas"/>
    <property type="match status" value="1"/>
</dbReference>
<dbReference type="SMART" id="SM00851">
    <property type="entry name" value="MGS"/>
    <property type="match status" value="1"/>
</dbReference>
<dbReference type="SUPFAM" id="SSF53927">
    <property type="entry name" value="Cytidine deaminase-like"/>
    <property type="match status" value="1"/>
</dbReference>
<dbReference type="SUPFAM" id="SSF52335">
    <property type="entry name" value="Methylglyoxal synthase-like"/>
    <property type="match status" value="1"/>
</dbReference>
<dbReference type="PROSITE" id="PS51855">
    <property type="entry name" value="MGS"/>
    <property type="match status" value="1"/>
</dbReference>